<proteinExistence type="inferred from homology"/>
<accession>Q14H73</accession>
<evidence type="ECO:0000255" key="1">
    <source>
        <dbReference type="HAMAP-Rule" id="MF_00110"/>
    </source>
</evidence>
<gene>
    <name evidence="1" type="primary">aroB</name>
    <name type="ordered locus">FTF1154c</name>
</gene>
<organism>
    <name type="scientific">Francisella tularensis subsp. tularensis (strain FSC 198)</name>
    <dbReference type="NCBI Taxonomy" id="393115"/>
    <lineage>
        <taxon>Bacteria</taxon>
        <taxon>Pseudomonadati</taxon>
        <taxon>Pseudomonadota</taxon>
        <taxon>Gammaproteobacteria</taxon>
        <taxon>Thiotrichales</taxon>
        <taxon>Francisellaceae</taxon>
        <taxon>Francisella</taxon>
    </lineage>
</organism>
<reference key="1">
    <citation type="journal article" date="2007" name="PLoS ONE">
        <title>Genome sequencing shows that European isolates of Francisella tularensis subspecies tularensis are almost identical to US laboratory strain Schu S4.</title>
        <authorList>
            <person name="Chaudhuri R.R."/>
            <person name="Ren C.-P."/>
            <person name="Desmond L."/>
            <person name="Vincent G.A."/>
            <person name="Silman N.J."/>
            <person name="Brehm J.K."/>
            <person name="Elmore M.J."/>
            <person name="Hudson M.J."/>
            <person name="Forsman M."/>
            <person name="Isherwood K.E."/>
            <person name="Gurycova D."/>
            <person name="Minton N.P."/>
            <person name="Titball R.W."/>
            <person name="Pallen M.J."/>
            <person name="Vipond R."/>
        </authorList>
    </citation>
    <scope>NUCLEOTIDE SEQUENCE [LARGE SCALE GENOMIC DNA]</scope>
    <source>
        <strain>FSC 198</strain>
    </source>
</reference>
<sequence length="359" mass="40156">MISKLSVNPTFSPSYNIIVDSVLDFSHILEYVTNKQVLVVTNTTVAKLYLTKFLAALVDDLDVRTCILEDGEQYKSQQSLDKILSTLLENHFTRNSTVLVALGGGVIGDITGFAAAIYQRGIDFIQIPTTLLSQVDSSVGGKTAINHQLGKNMIGAFYQPKVVYTSIEFYKTLPQREYIAGMAEVVKYAFISKDFYLWLDSNRDKILAKDSVTLIEMVKRSCQIKAQVVAMDEKELTGARAILNFGHTFGHAIEKCQNYRGLKHGEAVGVGMAQAIDFSHYLGLISQQQAKDFNDFIVSFGISIDFPNDICQKEFLEAMLLDKKNSNKELKFILIENIGSLSLQKQSKNELEQFLDISR</sequence>
<dbReference type="EC" id="4.2.3.4" evidence="1"/>
<dbReference type="EMBL" id="AM286280">
    <property type="protein sequence ID" value="CAL09170.1"/>
    <property type="molecule type" value="Genomic_DNA"/>
</dbReference>
<dbReference type="RefSeq" id="WP_003021364.1">
    <property type="nucleotide sequence ID" value="NC_008245.1"/>
</dbReference>
<dbReference type="SMR" id="Q14H73"/>
<dbReference type="KEGG" id="ftf:FTF1154c"/>
<dbReference type="HOGENOM" id="CLU_001201_0_2_6"/>
<dbReference type="UniPathway" id="UPA00053">
    <property type="reaction ID" value="UER00085"/>
</dbReference>
<dbReference type="GO" id="GO:0005737">
    <property type="term" value="C:cytoplasm"/>
    <property type="evidence" value="ECO:0007669"/>
    <property type="project" value="UniProtKB-SubCell"/>
</dbReference>
<dbReference type="GO" id="GO:0003856">
    <property type="term" value="F:3-dehydroquinate synthase activity"/>
    <property type="evidence" value="ECO:0007669"/>
    <property type="project" value="UniProtKB-UniRule"/>
</dbReference>
<dbReference type="GO" id="GO:0046872">
    <property type="term" value="F:metal ion binding"/>
    <property type="evidence" value="ECO:0007669"/>
    <property type="project" value="UniProtKB-KW"/>
</dbReference>
<dbReference type="GO" id="GO:0000166">
    <property type="term" value="F:nucleotide binding"/>
    <property type="evidence" value="ECO:0007669"/>
    <property type="project" value="UniProtKB-KW"/>
</dbReference>
<dbReference type="GO" id="GO:0008652">
    <property type="term" value="P:amino acid biosynthetic process"/>
    <property type="evidence" value="ECO:0007669"/>
    <property type="project" value="UniProtKB-KW"/>
</dbReference>
<dbReference type="GO" id="GO:0009073">
    <property type="term" value="P:aromatic amino acid family biosynthetic process"/>
    <property type="evidence" value="ECO:0007669"/>
    <property type="project" value="UniProtKB-KW"/>
</dbReference>
<dbReference type="GO" id="GO:0009423">
    <property type="term" value="P:chorismate biosynthetic process"/>
    <property type="evidence" value="ECO:0007669"/>
    <property type="project" value="UniProtKB-UniRule"/>
</dbReference>
<dbReference type="CDD" id="cd08195">
    <property type="entry name" value="DHQS"/>
    <property type="match status" value="1"/>
</dbReference>
<dbReference type="FunFam" id="3.40.50.1970:FF:000001">
    <property type="entry name" value="3-dehydroquinate synthase"/>
    <property type="match status" value="1"/>
</dbReference>
<dbReference type="Gene3D" id="3.40.50.1970">
    <property type="match status" value="1"/>
</dbReference>
<dbReference type="Gene3D" id="1.20.1090.10">
    <property type="entry name" value="Dehydroquinate synthase-like - alpha domain"/>
    <property type="match status" value="1"/>
</dbReference>
<dbReference type="HAMAP" id="MF_00110">
    <property type="entry name" value="DHQ_synthase"/>
    <property type="match status" value="1"/>
</dbReference>
<dbReference type="InterPro" id="IPR050071">
    <property type="entry name" value="Dehydroquinate_synthase"/>
</dbReference>
<dbReference type="InterPro" id="IPR016037">
    <property type="entry name" value="DHQ_synth_AroB"/>
</dbReference>
<dbReference type="InterPro" id="IPR030963">
    <property type="entry name" value="DHQ_synth_fam"/>
</dbReference>
<dbReference type="InterPro" id="IPR030960">
    <property type="entry name" value="DHQS/DOIS_N"/>
</dbReference>
<dbReference type="InterPro" id="IPR056179">
    <property type="entry name" value="DHQS_C"/>
</dbReference>
<dbReference type="NCBIfam" id="TIGR01357">
    <property type="entry name" value="aroB"/>
    <property type="match status" value="1"/>
</dbReference>
<dbReference type="PANTHER" id="PTHR43622">
    <property type="entry name" value="3-DEHYDROQUINATE SYNTHASE"/>
    <property type="match status" value="1"/>
</dbReference>
<dbReference type="PANTHER" id="PTHR43622:SF7">
    <property type="entry name" value="3-DEHYDROQUINATE SYNTHASE, CHLOROPLASTIC"/>
    <property type="match status" value="1"/>
</dbReference>
<dbReference type="Pfam" id="PF01761">
    <property type="entry name" value="DHQ_synthase"/>
    <property type="match status" value="1"/>
</dbReference>
<dbReference type="Pfam" id="PF24621">
    <property type="entry name" value="DHQS_C"/>
    <property type="match status" value="1"/>
</dbReference>
<dbReference type="PIRSF" id="PIRSF001455">
    <property type="entry name" value="DHQ_synth"/>
    <property type="match status" value="1"/>
</dbReference>
<dbReference type="SUPFAM" id="SSF56796">
    <property type="entry name" value="Dehydroquinate synthase-like"/>
    <property type="match status" value="1"/>
</dbReference>
<protein>
    <recommendedName>
        <fullName evidence="1">3-dehydroquinate synthase</fullName>
        <shortName evidence="1">DHQS</shortName>
        <ecNumber evidence="1">4.2.3.4</ecNumber>
    </recommendedName>
</protein>
<keyword id="KW-0028">Amino-acid biosynthesis</keyword>
<keyword id="KW-0057">Aromatic amino acid biosynthesis</keyword>
<keyword id="KW-0170">Cobalt</keyword>
<keyword id="KW-0963">Cytoplasm</keyword>
<keyword id="KW-0456">Lyase</keyword>
<keyword id="KW-0479">Metal-binding</keyword>
<keyword id="KW-0520">NAD</keyword>
<keyword id="KW-0547">Nucleotide-binding</keyword>
<keyword id="KW-0862">Zinc</keyword>
<comment type="function">
    <text evidence="1">Catalyzes the conversion of 3-deoxy-D-arabino-heptulosonate 7-phosphate (DAHP) to dehydroquinate (DHQ).</text>
</comment>
<comment type="catalytic activity">
    <reaction evidence="1">
        <text>7-phospho-2-dehydro-3-deoxy-D-arabino-heptonate = 3-dehydroquinate + phosphate</text>
        <dbReference type="Rhea" id="RHEA:21968"/>
        <dbReference type="ChEBI" id="CHEBI:32364"/>
        <dbReference type="ChEBI" id="CHEBI:43474"/>
        <dbReference type="ChEBI" id="CHEBI:58394"/>
        <dbReference type="EC" id="4.2.3.4"/>
    </reaction>
</comment>
<comment type="cofactor">
    <cofactor evidence="1">
        <name>Co(2+)</name>
        <dbReference type="ChEBI" id="CHEBI:48828"/>
    </cofactor>
    <cofactor evidence="1">
        <name>Zn(2+)</name>
        <dbReference type="ChEBI" id="CHEBI:29105"/>
    </cofactor>
    <text evidence="1">Binds 1 divalent metal cation per subunit. Can use either Co(2+) or Zn(2+).</text>
</comment>
<comment type="cofactor">
    <cofactor evidence="1">
        <name>NAD(+)</name>
        <dbReference type="ChEBI" id="CHEBI:57540"/>
    </cofactor>
</comment>
<comment type="pathway">
    <text evidence="1">Metabolic intermediate biosynthesis; chorismate biosynthesis; chorismate from D-erythrose 4-phosphate and phosphoenolpyruvate: step 2/7.</text>
</comment>
<comment type="subcellular location">
    <subcellularLocation>
        <location evidence="1">Cytoplasm</location>
    </subcellularLocation>
</comment>
<comment type="similarity">
    <text evidence="1">Belongs to the sugar phosphate cyclases superfamily. Dehydroquinate synthase family.</text>
</comment>
<feature type="chain" id="PRO_1000094517" description="3-dehydroquinate synthase">
    <location>
        <begin position="1"/>
        <end position="359"/>
    </location>
</feature>
<feature type="binding site" evidence="1">
    <location>
        <begin position="70"/>
        <end position="75"/>
    </location>
    <ligand>
        <name>NAD(+)</name>
        <dbReference type="ChEBI" id="CHEBI:57540"/>
    </ligand>
</feature>
<feature type="binding site" evidence="1">
    <location>
        <begin position="105"/>
        <end position="109"/>
    </location>
    <ligand>
        <name>NAD(+)</name>
        <dbReference type="ChEBI" id="CHEBI:57540"/>
    </ligand>
</feature>
<feature type="binding site" evidence="1">
    <location>
        <begin position="129"/>
        <end position="130"/>
    </location>
    <ligand>
        <name>NAD(+)</name>
        <dbReference type="ChEBI" id="CHEBI:57540"/>
    </ligand>
</feature>
<feature type="binding site" evidence="1">
    <location>
        <position position="142"/>
    </location>
    <ligand>
        <name>NAD(+)</name>
        <dbReference type="ChEBI" id="CHEBI:57540"/>
    </ligand>
</feature>
<feature type="binding site" evidence="1">
    <location>
        <position position="151"/>
    </location>
    <ligand>
        <name>NAD(+)</name>
        <dbReference type="ChEBI" id="CHEBI:57540"/>
    </ligand>
</feature>
<feature type="binding site" evidence="1">
    <location>
        <begin position="169"/>
        <end position="172"/>
    </location>
    <ligand>
        <name>NAD(+)</name>
        <dbReference type="ChEBI" id="CHEBI:57540"/>
    </ligand>
</feature>
<feature type="binding site" evidence="1">
    <location>
        <position position="184"/>
    </location>
    <ligand>
        <name>Zn(2+)</name>
        <dbReference type="ChEBI" id="CHEBI:29105"/>
    </ligand>
</feature>
<feature type="binding site" evidence="1">
    <location>
        <position position="247"/>
    </location>
    <ligand>
        <name>Zn(2+)</name>
        <dbReference type="ChEBI" id="CHEBI:29105"/>
    </ligand>
</feature>
<feature type="binding site" evidence="1">
    <location>
        <position position="264"/>
    </location>
    <ligand>
        <name>Zn(2+)</name>
        <dbReference type="ChEBI" id="CHEBI:29105"/>
    </ligand>
</feature>
<name>AROB_FRAT1</name>